<feature type="chain" id="PRO_1000046949" description="PF03932 family protein CutC">
    <location>
        <begin position="1"/>
        <end position="254"/>
    </location>
</feature>
<comment type="subcellular location">
    <subcellularLocation>
        <location evidence="1">Cytoplasm</location>
    </subcellularLocation>
</comment>
<comment type="similarity">
    <text evidence="1">Belongs to the CutC family.</text>
</comment>
<comment type="caution">
    <text evidence="1">Once thought to be involved in copper homeostasis, experiments in E.coli have shown this is not the case.</text>
</comment>
<proteinExistence type="inferred from homology"/>
<keyword id="KW-0963">Cytoplasm</keyword>
<gene>
    <name evidence="1" type="primary">cutC</name>
    <name type="ordered locus">YE2403</name>
</gene>
<organism>
    <name type="scientific">Yersinia enterocolitica serotype O:8 / biotype 1B (strain NCTC 13174 / 8081)</name>
    <dbReference type="NCBI Taxonomy" id="393305"/>
    <lineage>
        <taxon>Bacteria</taxon>
        <taxon>Pseudomonadati</taxon>
        <taxon>Pseudomonadota</taxon>
        <taxon>Gammaproteobacteria</taxon>
        <taxon>Enterobacterales</taxon>
        <taxon>Yersiniaceae</taxon>
        <taxon>Yersinia</taxon>
    </lineage>
</organism>
<accession>A1JRM5</accession>
<protein>
    <recommendedName>
        <fullName evidence="1">PF03932 family protein CutC</fullName>
    </recommendedName>
</protein>
<sequence>MTKLEICCYSVDCAQIAEKAGADRIELCCGQSEGGLTPSIGALMQARETVTIPVHPIVRPRGGDFCYSDNDFAIIKNDIARIRDMGFAGVVVGVLDIDGHIDMRRMREIMSVSGSLAVTFHRAFDMCQNPMIALQQLADLNVARILTSGQQQNAELGLALLKDLVAATQGQGPIIMAGAGVRLTNMQKFIDAGIRELHSSAGRTVPSTMKYRKAGVTMCADSDVDEFAHYCVDGEVVEAMKSLLVMGAPLPQSA</sequence>
<dbReference type="EMBL" id="AM286415">
    <property type="protein sequence ID" value="CAL12455.1"/>
    <property type="molecule type" value="Genomic_DNA"/>
</dbReference>
<dbReference type="RefSeq" id="WP_005169161.1">
    <property type="nucleotide sequence ID" value="NC_008800.1"/>
</dbReference>
<dbReference type="RefSeq" id="YP_001006622.1">
    <property type="nucleotide sequence ID" value="NC_008800.1"/>
</dbReference>
<dbReference type="SMR" id="A1JRM5"/>
<dbReference type="GeneID" id="93972759"/>
<dbReference type="KEGG" id="yen:YE2403"/>
<dbReference type="PATRIC" id="fig|393305.7.peg.2558"/>
<dbReference type="eggNOG" id="COG3142">
    <property type="taxonomic scope" value="Bacteria"/>
</dbReference>
<dbReference type="HOGENOM" id="CLU_050555_3_1_6"/>
<dbReference type="OrthoDB" id="9815677at2"/>
<dbReference type="Proteomes" id="UP000000642">
    <property type="component" value="Chromosome"/>
</dbReference>
<dbReference type="GO" id="GO:0005737">
    <property type="term" value="C:cytoplasm"/>
    <property type="evidence" value="ECO:0007669"/>
    <property type="project" value="UniProtKB-SubCell"/>
</dbReference>
<dbReference type="GO" id="GO:0005507">
    <property type="term" value="F:copper ion binding"/>
    <property type="evidence" value="ECO:0007669"/>
    <property type="project" value="TreeGrafter"/>
</dbReference>
<dbReference type="FunFam" id="3.20.20.380:FF:000001">
    <property type="entry name" value="Copper homeostasis protein CutC"/>
    <property type="match status" value="1"/>
</dbReference>
<dbReference type="Gene3D" id="3.20.20.380">
    <property type="entry name" value="Copper homeostasis (CutC) domain"/>
    <property type="match status" value="1"/>
</dbReference>
<dbReference type="HAMAP" id="MF_00795">
    <property type="entry name" value="CutC"/>
    <property type="match status" value="1"/>
</dbReference>
<dbReference type="InterPro" id="IPR005627">
    <property type="entry name" value="CutC-like"/>
</dbReference>
<dbReference type="InterPro" id="IPR036822">
    <property type="entry name" value="CutC-like_dom_sf"/>
</dbReference>
<dbReference type="NCBIfam" id="NF008603">
    <property type="entry name" value="PRK11572.1"/>
    <property type="match status" value="1"/>
</dbReference>
<dbReference type="PANTHER" id="PTHR12598">
    <property type="entry name" value="COPPER HOMEOSTASIS PROTEIN CUTC"/>
    <property type="match status" value="1"/>
</dbReference>
<dbReference type="PANTHER" id="PTHR12598:SF0">
    <property type="entry name" value="COPPER HOMEOSTASIS PROTEIN CUTC HOMOLOG"/>
    <property type="match status" value="1"/>
</dbReference>
<dbReference type="Pfam" id="PF03932">
    <property type="entry name" value="CutC"/>
    <property type="match status" value="1"/>
</dbReference>
<dbReference type="SUPFAM" id="SSF110395">
    <property type="entry name" value="CutC-like"/>
    <property type="match status" value="1"/>
</dbReference>
<reference key="1">
    <citation type="journal article" date="2006" name="PLoS Genet.">
        <title>The complete genome sequence and comparative genome analysis of the high pathogenicity Yersinia enterocolitica strain 8081.</title>
        <authorList>
            <person name="Thomson N.R."/>
            <person name="Howard S."/>
            <person name="Wren B.W."/>
            <person name="Holden M.T.G."/>
            <person name="Crossman L."/>
            <person name="Challis G.L."/>
            <person name="Churcher C."/>
            <person name="Mungall K."/>
            <person name="Brooks K."/>
            <person name="Chillingworth T."/>
            <person name="Feltwell T."/>
            <person name="Abdellah Z."/>
            <person name="Hauser H."/>
            <person name="Jagels K."/>
            <person name="Maddison M."/>
            <person name="Moule S."/>
            <person name="Sanders M."/>
            <person name="Whitehead S."/>
            <person name="Quail M.A."/>
            <person name="Dougan G."/>
            <person name="Parkhill J."/>
            <person name="Prentice M.B."/>
        </authorList>
    </citation>
    <scope>NUCLEOTIDE SEQUENCE [LARGE SCALE GENOMIC DNA]</scope>
    <source>
        <strain>NCTC 13174 / 8081</strain>
    </source>
</reference>
<name>CUTC_YERE8</name>
<evidence type="ECO:0000255" key="1">
    <source>
        <dbReference type="HAMAP-Rule" id="MF_00795"/>
    </source>
</evidence>